<dbReference type="EMBL" id="D87967">
    <property type="protein sequence ID" value="BAA13520.1"/>
    <property type="molecule type" value="mRNA"/>
</dbReference>
<dbReference type="EMBL" id="D87968">
    <property type="protein sequence ID" value="BAA13521.1"/>
    <property type="molecule type" value="mRNA"/>
</dbReference>
<dbReference type="EMBL" id="D85785">
    <property type="protein sequence ID" value="BAA20376.1"/>
    <property type="molecule type" value="mRNA"/>
</dbReference>
<dbReference type="EMBL" id="U89694">
    <property type="protein sequence ID" value="AAB92591.1"/>
    <property type="molecule type" value="mRNA"/>
</dbReference>
<dbReference type="EMBL" id="AF072543">
    <property type="protein sequence ID" value="AAC24886.1"/>
    <property type="molecule type" value="mRNA"/>
</dbReference>
<dbReference type="EMBL" id="AF072544">
    <property type="protein sequence ID" value="AAC24887.1"/>
    <property type="molecule type" value="mRNA"/>
</dbReference>
<dbReference type="EMBL" id="AB024507">
    <property type="protein sequence ID" value="BAA89290.1"/>
    <property type="molecule type" value="Genomic_DNA"/>
</dbReference>
<dbReference type="EMBL" id="AB018194">
    <property type="protein sequence ID" value="BAA76555.1"/>
    <property type="molecule type" value="mRNA"/>
</dbReference>
<dbReference type="EMBL" id="AB024507">
    <property type="protein sequence ID" value="BAA89289.1"/>
    <property type="molecule type" value="Genomic_DNA"/>
</dbReference>
<dbReference type="EMBL" id="AF332079">
    <property type="protein sequence ID" value="AAK56107.1"/>
    <property type="molecule type" value="mRNA"/>
</dbReference>
<dbReference type="EMBL" id="AF332080">
    <property type="protein sequence ID" value="AAK56108.1"/>
    <property type="molecule type" value="mRNA"/>
</dbReference>
<dbReference type="EMBL" id="Y10349">
    <property type="protein sequence ID" value="CAA71375.1"/>
    <property type="molecule type" value="mRNA"/>
</dbReference>
<dbReference type="EMBL" id="AL808126">
    <property type="status" value="NOT_ANNOTATED_CDS"/>
    <property type="molecule type" value="Genomic_DNA"/>
</dbReference>
<dbReference type="EMBL" id="CH466519">
    <property type="protein sequence ID" value="EDL28242.1"/>
    <property type="molecule type" value="Genomic_DNA"/>
</dbReference>
<dbReference type="CCDS" id="CCDS16729.1">
    <molecule id="P97797-2"/>
</dbReference>
<dbReference type="CCDS" id="CCDS50708.1">
    <molecule id="P97797-4"/>
</dbReference>
<dbReference type="CCDS" id="CCDS71142.1">
    <molecule id="P97797-1"/>
</dbReference>
<dbReference type="CCDS" id="CCDS71143.1">
    <molecule id="P97797-3"/>
</dbReference>
<dbReference type="PIR" id="JC5288">
    <property type="entry name" value="JC5288"/>
</dbReference>
<dbReference type="PIR" id="JC5289">
    <property type="entry name" value="JC5289"/>
</dbReference>
<dbReference type="RefSeq" id="NP_001171118.1">
    <molecule id="P97797-4"/>
    <property type="nucleotide sequence ID" value="NM_001177647.3"/>
</dbReference>
<dbReference type="RefSeq" id="NP_001277948.1">
    <molecule id="P97797-1"/>
    <property type="nucleotide sequence ID" value="NM_001291019.2"/>
</dbReference>
<dbReference type="RefSeq" id="NP_001277949.1">
    <molecule id="P97797-1"/>
    <property type="nucleotide sequence ID" value="NM_001291020.2"/>
</dbReference>
<dbReference type="RefSeq" id="NP_001277950.1">
    <molecule id="P97797-3"/>
    <property type="nucleotide sequence ID" value="NM_001291021.2"/>
</dbReference>
<dbReference type="RefSeq" id="NP_001342087.1">
    <molecule id="P97797-2"/>
    <property type="nucleotide sequence ID" value="NM_001355158.2"/>
</dbReference>
<dbReference type="RefSeq" id="NP_001407695.1">
    <molecule id="P97797-1"/>
    <property type="nucleotide sequence ID" value="NM_001420766.1"/>
</dbReference>
<dbReference type="RefSeq" id="NP_001407696.1">
    <molecule id="P97797-2"/>
    <property type="nucleotide sequence ID" value="NM_001420767.1"/>
</dbReference>
<dbReference type="RefSeq" id="NP_001407697.1">
    <molecule id="P97797-2"/>
    <property type="nucleotide sequence ID" value="NM_001420768.1"/>
</dbReference>
<dbReference type="RefSeq" id="NP_031573.2">
    <molecule id="P97797-2"/>
    <property type="nucleotide sequence ID" value="NM_007547.5"/>
</dbReference>
<dbReference type="RefSeq" id="XP_006499049.1">
    <property type="nucleotide sequence ID" value="XM_006498986.3"/>
</dbReference>
<dbReference type="RefSeq" id="XP_017172050.1">
    <property type="nucleotide sequence ID" value="XM_017316561.1"/>
</dbReference>
<dbReference type="RefSeq" id="XP_017172057.1">
    <molecule id="P97797-3"/>
    <property type="nucleotide sequence ID" value="XM_017316568.2"/>
</dbReference>
<dbReference type="RefSeq" id="XP_017172058.1">
    <molecule id="P97797-4"/>
    <property type="nucleotide sequence ID" value="XM_017316569.2"/>
</dbReference>
<dbReference type="RefSeq" id="XP_036015585.1">
    <molecule id="P97797-1"/>
    <property type="nucleotide sequence ID" value="XM_036159692.1"/>
</dbReference>
<dbReference type="PDB" id="2YZ1">
    <property type="method" value="X-ray"/>
    <property type="resolution" value="1.40 A"/>
    <property type="chains" value="A/B=32-146"/>
</dbReference>
<dbReference type="PDBsum" id="2YZ1"/>
<dbReference type="SMR" id="P97797"/>
<dbReference type="BioGRID" id="202490">
    <property type="interactions" value="15"/>
</dbReference>
<dbReference type="CORUM" id="P97797"/>
<dbReference type="FunCoup" id="P97797">
    <property type="interactions" value="430"/>
</dbReference>
<dbReference type="IntAct" id="P97797">
    <property type="interactions" value="4"/>
</dbReference>
<dbReference type="STRING" id="10090.ENSMUSP00000124048"/>
<dbReference type="GlyConnect" id="2714">
    <property type="glycosylation" value="29 N-Linked glycans (13 sites)"/>
</dbReference>
<dbReference type="GlyCosmos" id="P97797">
    <property type="glycosylation" value="17 sites, 28 glycans"/>
</dbReference>
<dbReference type="GlyGen" id="P97797">
    <property type="glycosylation" value="22 sites, 37 N-linked glycans (15 sites), 1 O-linked glycan (4 sites)"/>
</dbReference>
<dbReference type="iPTMnet" id="P97797"/>
<dbReference type="MetOSite" id="P97797"/>
<dbReference type="PhosphoSitePlus" id="P97797"/>
<dbReference type="SwissPalm" id="P97797"/>
<dbReference type="jPOST" id="P97797"/>
<dbReference type="PaxDb" id="10090-ENSMUSP00000099491"/>
<dbReference type="PeptideAtlas" id="P97797"/>
<dbReference type="ProteomicsDB" id="261353">
    <molecule id="P97797-1"/>
</dbReference>
<dbReference type="ProteomicsDB" id="261354">
    <molecule id="P97797-2"/>
</dbReference>
<dbReference type="ProteomicsDB" id="261355">
    <molecule id="P97797-3"/>
</dbReference>
<dbReference type="ProteomicsDB" id="328968"/>
<dbReference type="ProteomicsDB" id="339176"/>
<dbReference type="ProteomicsDB" id="367856"/>
<dbReference type="Pumba" id="P97797"/>
<dbReference type="ABCD" id="P97797">
    <property type="antibodies" value="27 sequenced antibodies"/>
</dbReference>
<dbReference type="DNASU" id="19261"/>
<dbReference type="Ensembl" id="ENSMUST00000049262.14">
    <molecule id="P97797-1"/>
    <property type="protein sequence ID" value="ENSMUSP00000049022.8"/>
    <property type="gene ID" value="ENSMUSG00000037902.19"/>
</dbReference>
<dbReference type="Ensembl" id="ENSMUST00000099113.10">
    <molecule id="P97797-3"/>
    <property type="protein sequence ID" value="ENSMUSP00000096713.4"/>
    <property type="gene ID" value="ENSMUSG00000037902.19"/>
</dbReference>
<dbReference type="Ensembl" id="ENSMUST00000103202.10">
    <molecule id="P97797-2"/>
    <property type="protein sequence ID" value="ENSMUSP00000099491.4"/>
    <property type="gene ID" value="ENSMUSG00000037902.19"/>
</dbReference>
<dbReference type="Ensembl" id="ENSMUST00000103203.8">
    <molecule id="P97797-2"/>
    <property type="protein sequence ID" value="ENSMUSP00000099492.2"/>
    <property type="gene ID" value="ENSMUSG00000037902.19"/>
</dbReference>
<dbReference type="Ensembl" id="ENSMUST00000160276.2">
    <molecule id="P97797-4"/>
    <property type="protein sequence ID" value="ENSMUSP00000125004.2"/>
    <property type="gene ID" value="ENSMUSG00000037902.19"/>
</dbReference>
<dbReference type="Ensembl" id="ENSMUST00000161620.8">
    <molecule id="P97797-1"/>
    <property type="protein sequence ID" value="ENSMUSP00000124048.2"/>
    <property type="gene ID" value="ENSMUSG00000037902.19"/>
</dbReference>
<dbReference type="Ensembl" id="ENSMUST00000179001.8">
    <molecule id="P97797-2"/>
    <property type="protein sequence ID" value="ENSMUSP00000137611.2"/>
    <property type="gene ID" value="ENSMUSG00000037902.19"/>
</dbReference>
<dbReference type="GeneID" id="19261"/>
<dbReference type="KEGG" id="mmu:19261"/>
<dbReference type="UCSC" id="uc008mhz.1">
    <property type="organism name" value="mouse"/>
</dbReference>
<dbReference type="AGR" id="MGI:108563"/>
<dbReference type="CTD" id="140885"/>
<dbReference type="MGI" id="MGI:108563">
    <property type="gene designation" value="Sirpa"/>
</dbReference>
<dbReference type="VEuPathDB" id="HostDB:ENSMUSG00000037902"/>
<dbReference type="eggNOG" id="ENOG502S1XD">
    <property type="taxonomic scope" value="Eukaryota"/>
</dbReference>
<dbReference type="GeneTree" id="ENSGT00960000186656"/>
<dbReference type="HOGENOM" id="CLU_044430_2_0_1"/>
<dbReference type="InParanoid" id="P97797"/>
<dbReference type="OMA" id="ANWNIFI"/>
<dbReference type="OrthoDB" id="6370831at2759"/>
<dbReference type="Reactome" id="R-MMU-202733">
    <property type="pathway name" value="Cell surface interactions at the vascular wall"/>
</dbReference>
<dbReference type="Reactome" id="R-MMU-391160">
    <property type="pathway name" value="Signal regulatory protein family interactions"/>
</dbReference>
<dbReference type="Reactome" id="R-MMU-6798695">
    <property type="pathway name" value="Neutrophil degranulation"/>
</dbReference>
<dbReference type="BioGRID-ORCS" id="19261">
    <property type="hits" value="4 hits in 80 CRISPR screens"/>
</dbReference>
<dbReference type="CD-CODE" id="CE726F99">
    <property type="entry name" value="Postsynaptic density"/>
</dbReference>
<dbReference type="ChiTaRS" id="Sirpa">
    <property type="organism name" value="mouse"/>
</dbReference>
<dbReference type="EvolutionaryTrace" id="P97797"/>
<dbReference type="PRO" id="PR:P97797"/>
<dbReference type="Proteomes" id="UP000000589">
    <property type="component" value="Chromosome 2"/>
</dbReference>
<dbReference type="RNAct" id="P97797">
    <property type="molecule type" value="protein"/>
</dbReference>
<dbReference type="Bgee" id="ENSMUSG00000037902">
    <property type="expression patterns" value="Expressed in stroma of bone marrow and 269 other cell types or tissues"/>
</dbReference>
<dbReference type="ExpressionAtlas" id="P97797">
    <property type="expression patterns" value="baseline and differential"/>
</dbReference>
<dbReference type="GO" id="GO:0005886">
    <property type="term" value="C:plasma membrane"/>
    <property type="evidence" value="ECO:0000314"/>
    <property type="project" value="MGI"/>
</dbReference>
<dbReference type="GO" id="GO:0019903">
    <property type="term" value="F:protein phosphatase binding"/>
    <property type="evidence" value="ECO:0000353"/>
    <property type="project" value="ARUK-UCL"/>
</dbReference>
<dbReference type="GO" id="GO:0004864">
    <property type="term" value="F:protein phosphatase inhibitor activity"/>
    <property type="evidence" value="ECO:0000315"/>
    <property type="project" value="ARUK-UCL"/>
</dbReference>
<dbReference type="GO" id="GO:0045309">
    <property type="term" value="F:protein phosphorylated amino acid binding"/>
    <property type="evidence" value="ECO:0000353"/>
    <property type="project" value="MGI"/>
</dbReference>
<dbReference type="GO" id="GO:0017124">
    <property type="term" value="F:SH3 domain binding"/>
    <property type="evidence" value="ECO:0007669"/>
    <property type="project" value="UniProtKB-KW"/>
</dbReference>
<dbReference type="GO" id="GO:0007015">
    <property type="term" value="P:actin filament organization"/>
    <property type="evidence" value="ECO:0000315"/>
    <property type="project" value="MGI"/>
</dbReference>
<dbReference type="GO" id="GO:0048870">
    <property type="term" value="P:cell motility"/>
    <property type="evidence" value="ECO:0000315"/>
    <property type="project" value="MGI"/>
</dbReference>
<dbReference type="GO" id="GO:0007160">
    <property type="term" value="P:cell-matrix adhesion"/>
    <property type="evidence" value="ECO:0000315"/>
    <property type="project" value="MGI"/>
</dbReference>
<dbReference type="GO" id="GO:0007010">
    <property type="term" value="P:cytoskeleton organization"/>
    <property type="evidence" value="ECO:0000315"/>
    <property type="project" value="MGI"/>
</dbReference>
<dbReference type="GO" id="GO:0097530">
    <property type="term" value="P:granulocyte migration"/>
    <property type="evidence" value="ECO:0000316"/>
    <property type="project" value="ARUK-UCL"/>
</dbReference>
<dbReference type="GO" id="GO:0002244">
    <property type="term" value="P:hematopoietic progenitor cell differentiation"/>
    <property type="evidence" value="ECO:0000315"/>
    <property type="project" value="MGI"/>
</dbReference>
<dbReference type="GO" id="GO:0043124">
    <property type="term" value="P:negative regulation of canonical NF-kappaB signal transduction"/>
    <property type="evidence" value="ECO:0000315"/>
    <property type="project" value="ARUK-UCL"/>
</dbReference>
<dbReference type="GO" id="GO:0071650">
    <property type="term" value="P:negative regulation of chemokine (C-C motif) ligand 5 production"/>
    <property type="evidence" value="ECO:0000315"/>
    <property type="project" value="ARUK-UCL"/>
</dbReference>
<dbReference type="GO" id="GO:1900016">
    <property type="term" value="P:negative regulation of cytokine production involved in inflammatory response"/>
    <property type="evidence" value="ECO:0000315"/>
    <property type="project" value="ARUK-UCL"/>
</dbReference>
<dbReference type="GO" id="GO:0070373">
    <property type="term" value="P:negative regulation of ERK1 and ERK2 cascade"/>
    <property type="evidence" value="ECO:0000315"/>
    <property type="project" value="ARUK-UCL"/>
</dbReference>
<dbReference type="GO" id="GO:0032688">
    <property type="term" value="P:negative regulation of interferon-beta production"/>
    <property type="evidence" value="ECO:0000315"/>
    <property type="project" value="ARUK-UCL"/>
</dbReference>
<dbReference type="GO" id="GO:0032715">
    <property type="term" value="P:negative regulation of interleukin-6 production"/>
    <property type="evidence" value="ECO:0000315"/>
    <property type="project" value="ARUK-UCL"/>
</dbReference>
<dbReference type="GO" id="GO:0046329">
    <property type="term" value="P:negative regulation of JNK cascade"/>
    <property type="evidence" value="ECO:0000315"/>
    <property type="project" value="ARUK-UCL"/>
</dbReference>
<dbReference type="GO" id="GO:0031665">
    <property type="term" value="P:negative regulation of lipopolysaccharide-mediated signaling pathway"/>
    <property type="evidence" value="ECO:0000315"/>
    <property type="project" value="ARUK-UCL"/>
</dbReference>
<dbReference type="GO" id="GO:0071641">
    <property type="term" value="P:negative regulation of macrophage inflammatory protein 1 alpha production"/>
    <property type="evidence" value="ECO:0000315"/>
    <property type="project" value="ARUK-UCL"/>
</dbReference>
<dbReference type="GO" id="GO:0045019">
    <property type="term" value="P:negative regulation of nitric oxide biosynthetic process"/>
    <property type="evidence" value="ECO:0000315"/>
    <property type="project" value="ARUK-UCL"/>
</dbReference>
<dbReference type="GO" id="GO:0050765">
    <property type="term" value="P:negative regulation of phagocytosis"/>
    <property type="evidence" value="ECO:0000315"/>
    <property type="project" value="ARUK-UCL"/>
</dbReference>
<dbReference type="GO" id="GO:0032720">
    <property type="term" value="P:negative regulation of tumor necrosis factor production"/>
    <property type="evidence" value="ECO:0000315"/>
    <property type="project" value="ARUK-UCL"/>
</dbReference>
<dbReference type="GO" id="GO:0006911">
    <property type="term" value="P:phagocytosis, engulfment"/>
    <property type="evidence" value="ECO:0000314"/>
    <property type="project" value="MGI"/>
</dbReference>
<dbReference type="GO" id="GO:0006910">
    <property type="term" value="P:phagocytosis, recognition"/>
    <property type="evidence" value="ECO:0000314"/>
    <property type="project" value="MGI"/>
</dbReference>
<dbReference type="GO" id="GO:0050766">
    <property type="term" value="P:positive regulation of phagocytosis"/>
    <property type="evidence" value="ECO:0000314"/>
    <property type="project" value="MGI"/>
</dbReference>
<dbReference type="CDD" id="cd05772">
    <property type="entry name" value="IgC1_SIRP_domain_2"/>
    <property type="match status" value="1"/>
</dbReference>
<dbReference type="CDD" id="cd16085">
    <property type="entry name" value="IgC1_SIRP_domain_3"/>
    <property type="match status" value="1"/>
</dbReference>
<dbReference type="FunFam" id="2.60.40.10:FF:000490">
    <property type="entry name" value="Signal-regulatory protein beta 1"/>
    <property type="match status" value="1"/>
</dbReference>
<dbReference type="FunFam" id="2.60.40.10:FF:000295">
    <property type="entry name" value="Tyrosine-protein phosphatase non-receptor type substrate 1"/>
    <property type="match status" value="1"/>
</dbReference>
<dbReference type="FunFam" id="2.60.40.10:FF:000454">
    <property type="entry name" value="Tyrosine-protein phosphatase non-receptor type substrate 1"/>
    <property type="match status" value="1"/>
</dbReference>
<dbReference type="Gene3D" id="2.60.40.10">
    <property type="entry name" value="Immunoglobulins"/>
    <property type="match status" value="3"/>
</dbReference>
<dbReference type="InterPro" id="IPR051755">
    <property type="entry name" value="Ig-like_CS_Receptor"/>
</dbReference>
<dbReference type="InterPro" id="IPR007110">
    <property type="entry name" value="Ig-like_dom"/>
</dbReference>
<dbReference type="InterPro" id="IPR036179">
    <property type="entry name" value="Ig-like_dom_sf"/>
</dbReference>
<dbReference type="InterPro" id="IPR013783">
    <property type="entry name" value="Ig-like_fold"/>
</dbReference>
<dbReference type="InterPro" id="IPR003006">
    <property type="entry name" value="Ig/MHC_CS"/>
</dbReference>
<dbReference type="InterPro" id="IPR003597">
    <property type="entry name" value="Ig_C1-set"/>
</dbReference>
<dbReference type="InterPro" id="IPR003599">
    <property type="entry name" value="Ig_sub"/>
</dbReference>
<dbReference type="InterPro" id="IPR013106">
    <property type="entry name" value="Ig_V-set"/>
</dbReference>
<dbReference type="PANTHER" id="PTHR19971">
    <property type="entry name" value="SIGNAL-REGULATORY PROTEIN BETA"/>
    <property type="match status" value="1"/>
</dbReference>
<dbReference type="Pfam" id="PF07654">
    <property type="entry name" value="C1-set"/>
    <property type="match status" value="2"/>
</dbReference>
<dbReference type="Pfam" id="PF07686">
    <property type="entry name" value="V-set"/>
    <property type="match status" value="1"/>
</dbReference>
<dbReference type="SMART" id="SM00409">
    <property type="entry name" value="IG"/>
    <property type="match status" value="2"/>
</dbReference>
<dbReference type="SMART" id="SM00407">
    <property type="entry name" value="IGc1"/>
    <property type="match status" value="2"/>
</dbReference>
<dbReference type="SUPFAM" id="SSF48726">
    <property type="entry name" value="Immunoglobulin"/>
    <property type="match status" value="3"/>
</dbReference>
<dbReference type="PROSITE" id="PS50835">
    <property type="entry name" value="IG_LIKE"/>
    <property type="match status" value="3"/>
</dbReference>
<dbReference type="PROSITE" id="PS00290">
    <property type="entry name" value="IG_MHC"/>
    <property type="match status" value="1"/>
</dbReference>
<reference key="1">
    <citation type="journal article" date="1997" name="Biochem. Biophys. Res. Commun.">
        <title>Mouse and human SHPS-1: molecular cloning of cDNAs and chromosomal localization of genes.</title>
        <authorList>
            <person name="Yamao T."/>
            <person name="Matozaki T."/>
            <person name="Amano K."/>
            <person name="Matsuda Y."/>
            <person name="Takahashi N."/>
            <person name="Ochi F."/>
            <person name="Fujioka Y."/>
            <person name="Kasuga M."/>
        </authorList>
    </citation>
    <scope>NUCLEOTIDE SEQUENCE [MRNA] (ISOFORMS 1 AND 2)</scope>
    <source>
        <tissue>Brain</tissue>
    </source>
</reference>
<reference key="2">
    <citation type="journal article" date="1997" name="Genomics">
        <title>BIT (Bit) maps to mouse chromosome 2.</title>
        <authorList>
            <person name="Ohnishi H."/>
            <person name="Kubota M."/>
            <person name="Sano S."/>
        </authorList>
    </citation>
    <scope>NUCLEOTIDE SEQUENCE [MRNA] (ISOFORM 2)</scope>
    <source>
        <strain>BALB/cJ</strain>
        <tissue>Brain</tissue>
    </source>
</reference>
<reference key="3">
    <citation type="journal article" date="1997" name="J. Neurosci.">
        <title>The murine P84 neural adhesion molecule is SHPS-1, a member of the phosphatase-binding protein family.</title>
        <authorList>
            <person name="Comu S."/>
            <person name="Weng W."/>
            <person name="Olinsky S."/>
            <person name="Ishwad P."/>
            <person name="Mi Z."/>
            <person name="Hempel J."/>
            <person name="Watkins S."/>
            <person name="Lagenaur C.F."/>
            <person name="Narayanan V."/>
        </authorList>
    </citation>
    <scope>NUCLEOTIDE SEQUENCE [MRNA] (ISOFORMS 2 AND 3)</scope>
    <scope>PROTEIN SEQUENCE OF 32-53 AND 422-433 (ISOFORM 2)</scope>
    <scope>GLYCOSYLATION</scope>
    <scope>TISSUE SPECIFICITY</scope>
    <source>
        <strain>BALB/cJ</strain>
        <tissue>Brain</tissue>
        <tissue>Cerebellum</tissue>
    </source>
</reference>
<reference key="4">
    <citation type="journal article" date="1998" name="J. Biol. Chem.">
        <title>High expression of inhibitory receptor SHPS-1 and its association with protein tyrosine phosphatase SHP-1 in macrophages.</title>
        <authorList>
            <person name="Veillette A."/>
            <person name="Thibaudeau E."/>
            <person name="Latour S."/>
        </authorList>
    </citation>
    <scope>NUCLEOTIDE SEQUENCE [MRNA] (ISOFORMS 2 AND 4)</scope>
    <scope>GLYCOSYLATION</scope>
    <scope>PHOSPHORYLATION AT TYROSINE RESIDUES</scope>
    <scope>INTERACTION WITH PTPN6</scope>
    <scope>TISSUE SPECIFICITY</scope>
    <source>
        <strain>C57BL/6J</strain>
        <tissue>Fetal thymus</tissue>
    </source>
</reference>
<reference key="5">
    <citation type="journal article" date="1999" name="Biochem. J.">
        <title>Gene structure of mouse BIT/SHPS-1.</title>
        <authorList>
            <person name="Sano S."/>
            <person name="Ohnishi H."/>
            <person name="Kubota M."/>
        </authorList>
    </citation>
    <scope>NUCLEOTIDE SEQUENCE [GENOMIC DNA / MRNA] (ISOFORMS 1; 2 AND 3)</scope>
    <scope>GLYCOSYLATION</scope>
    <source>
        <strain>129/SvJ</strain>
        <strain>C57BL/6J</strain>
        <tissue>Brain</tissue>
        <tissue>Liver</tissue>
    </source>
</reference>
<reference key="6">
    <citation type="journal article" date="2001" name="Mamm. Genome">
        <title>High-throughput sequence identification of gene coding variants within alcohol-related QTLs.</title>
        <authorList>
            <person name="Ehringer M.A."/>
            <person name="Thompson J."/>
            <person name="Conroy O."/>
            <person name="Xu Y."/>
            <person name="Yang F."/>
            <person name="Canniff J."/>
            <person name="Beeson M."/>
            <person name="Gordon L."/>
            <person name="Bennett B."/>
            <person name="Johnson T.E."/>
            <person name="Sikela J.M."/>
        </authorList>
    </citation>
    <scope>NUCLEOTIDE SEQUENCE [MRNA] (ISOFORM 2)</scope>
    <source>
        <strain>ILS</strain>
        <strain>ISS</strain>
    </source>
</reference>
<reference key="7">
    <citation type="submission" date="1997-01" db="EMBL/GenBank/DDBJ databases">
        <title>Epidermal growth factor-induced association of SHP2 with mouse SIRP-alpha1.</title>
        <authorList>
            <person name="Wang H."/>
            <person name="Chen Z."/>
            <person name="Ullrich A."/>
        </authorList>
    </citation>
    <scope>NUCLEOTIDE SEQUENCE [GENOMIC DNA] (ISOFORM 1)</scope>
    <source>
        <tissue>Placenta</tissue>
    </source>
</reference>
<reference key="8">
    <citation type="journal article" date="2009" name="PLoS Biol.">
        <title>Lineage-specific biology revealed by a finished genome assembly of the mouse.</title>
        <authorList>
            <person name="Church D.M."/>
            <person name="Goodstadt L."/>
            <person name="Hillier L.W."/>
            <person name="Zody M.C."/>
            <person name="Goldstein S."/>
            <person name="She X."/>
            <person name="Bult C.J."/>
            <person name="Agarwala R."/>
            <person name="Cherry J.L."/>
            <person name="DiCuccio M."/>
            <person name="Hlavina W."/>
            <person name="Kapustin Y."/>
            <person name="Meric P."/>
            <person name="Maglott D."/>
            <person name="Birtle Z."/>
            <person name="Marques A.C."/>
            <person name="Graves T."/>
            <person name="Zhou S."/>
            <person name="Teague B."/>
            <person name="Potamousis K."/>
            <person name="Churas C."/>
            <person name="Place M."/>
            <person name="Herschleb J."/>
            <person name="Runnheim R."/>
            <person name="Forrest D."/>
            <person name="Amos-Landgraf J."/>
            <person name="Schwartz D.C."/>
            <person name="Cheng Z."/>
            <person name="Lindblad-Toh K."/>
            <person name="Eichler E.E."/>
            <person name="Ponting C.P."/>
        </authorList>
    </citation>
    <scope>NUCLEOTIDE SEQUENCE [LARGE SCALE GENOMIC DNA]</scope>
    <source>
        <strain>C57BL/6J</strain>
    </source>
</reference>
<reference key="9">
    <citation type="submission" date="2005-07" db="EMBL/GenBank/DDBJ databases">
        <authorList>
            <person name="Mural R.J."/>
            <person name="Adams M.D."/>
            <person name="Myers E.W."/>
            <person name="Smith H.O."/>
            <person name="Venter J.C."/>
        </authorList>
    </citation>
    <scope>NUCLEOTIDE SEQUENCE [LARGE SCALE GENOMIC DNA]</scope>
</reference>
<reference key="10">
    <citation type="journal article" date="1990" name="Dev. Biol.">
        <title>Central nervous system antigen P84 can serve as a substrate for neurite outgrowth.</title>
        <authorList>
            <person name="Chuang W."/>
            <person name="Lagenaur C.F."/>
        </authorList>
    </citation>
    <scope>FUNCTION</scope>
    <scope>TISSUE SPECIFICITY</scope>
    <scope>DEVELOPMENTAL STAGE</scope>
</reference>
<reference key="11">
    <citation type="journal article" date="1998" name="J. Biol. Chem.">
        <title>Growth hormone regulation of SIRP and SHP-2 tyrosyl phosphorylation and association.</title>
        <authorList>
            <person name="Stofega M.R."/>
            <person name="Wang H."/>
            <person name="Ullrich A."/>
            <person name="Carter-Su C."/>
        </authorList>
    </citation>
    <scope>GLYCOSYLATION</scope>
    <scope>PHOSPHORYLATION BY JAK2 IN RESPONSE TO GROWTH HORMONE</scope>
    <scope>INTERACTION WITH JAK2 AND PTPN11</scope>
</reference>
<reference key="12">
    <citation type="journal article" date="1999" name="J. Biol. Chem.">
        <title>Integrin-associated protein is a ligand for the P84 neural adhesion molecule.</title>
        <authorList>
            <person name="Jiang P."/>
            <person name="Lagenaur C.F."/>
            <person name="Narayanan V."/>
        </authorList>
    </citation>
    <scope>INTERACTION WITH CD47</scope>
    <scope>TISSUE SPECIFICITY</scope>
</reference>
<reference key="13">
    <citation type="journal article" date="2000" name="J. Exp. Med.">
        <title>Negative regulation of phagocytosis in murine macrophages by the Src kinase family member, Fgr.</title>
        <authorList>
            <person name="Gresham H.D."/>
            <person name="Dale B.M."/>
            <person name="Potter J.W."/>
            <person name="Chang P.W."/>
            <person name="Vines C.M."/>
            <person name="Lowell C.A."/>
            <person name="Lagenaur C.F."/>
            <person name="Willman C.L."/>
        </authorList>
    </citation>
    <scope>INTERACTION WITH FGR</scope>
</reference>
<reference key="14">
    <citation type="journal article" date="2006" name="J. Proteome Res.">
        <title>Proteome-wide characterization of N-glycosylation events by diagonal chromatography.</title>
        <authorList>
            <person name="Ghesquiere B."/>
            <person name="Van Damme J."/>
            <person name="Martens L."/>
            <person name="Vandekerckhove J."/>
            <person name="Gevaert K."/>
        </authorList>
    </citation>
    <scope>GLYCOSYLATION [LARGE SCALE ANALYSIS] AT ASN-246</scope>
    <source>
        <strain>C57BL/6J</strain>
        <tissue>Plasma</tissue>
    </source>
</reference>
<reference key="15">
    <citation type="journal article" date="2008" name="J. Proteome Res.">
        <title>Large-scale identification and evolution indexing of tyrosine phosphorylation sites from murine brain.</title>
        <authorList>
            <person name="Ballif B.A."/>
            <person name="Carey G.R."/>
            <person name="Sunyaev S.R."/>
            <person name="Gygi S.P."/>
        </authorList>
    </citation>
    <scope>IDENTIFICATION BY MASS SPECTROMETRY [LARGE SCALE ANALYSIS]</scope>
    <source>
        <tissue>Brain</tissue>
    </source>
</reference>
<reference key="16">
    <citation type="journal article" date="2009" name="Immunity">
        <title>The phagosomal proteome in interferon-gamma-activated macrophages.</title>
        <authorList>
            <person name="Trost M."/>
            <person name="English L."/>
            <person name="Lemieux S."/>
            <person name="Courcelles M."/>
            <person name="Desjardins M."/>
            <person name="Thibault P."/>
        </authorList>
    </citation>
    <scope>IDENTIFICATION BY MASS SPECTROMETRY [LARGE SCALE ANALYSIS]</scope>
</reference>
<reference key="17">
    <citation type="journal article" date="2010" name="Cell">
        <title>A tissue-specific atlas of mouse protein phosphorylation and expression.</title>
        <authorList>
            <person name="Huttlin E.L."/>
            <person name="Jedrychowski M.P."/>
            <person name="Elias J.E."/>
            <person name="Goswami T."/>
            <person name="Rad R."/>
            <person name="Beausoleil S.A."/>
            <person name="Villen J."/>
            <person name="Haas W."/>
            <person name="Sowa M.E."/>
            <person name="Gygi S.P."/>
        </authorList>
    </citation>
    <scope>IDENTIFICATION BY MASS SPECTROMETRY [LARGE SCALE ANALYSIS]</scope>
    <source>
        <tissue>Brain</tissue>
        <tissue>Heart</tissue>
        <tissue>Kidney</tissue>
        <tissue>Lung</tissue>
        <tissue>Spleen</tissue>
    </source>
</reference>
<reference key="18">
    <citation type="journal article" date="2019" name="PLoS Biol.">
        <title>TRIM2, a novel member of the antiviral family, limits New World arenavirus entry.</title>
        <authorList>
            <person name="Sarute N."/>
            <person name="Ibrahim N."/>
            <person name="Medegan Fagla B."/>
            <person name="Lavanya M."/>
            <person name="Cuevas C."/>
            <person name="Stavrou S."/>
            <person name="Otkiran-Clare G."/>
            <person name="Tyynismaa H."/>
            <person name="Henao-Mejia J."/>
            <person name="Ross S.R."/>
        </authorList>
    </citation>
    <scope>FUNCTION</scope>
    <scope>INTERACTION WITH TRIM2</scope>
</reference>
<reference evidence="21" key="19">
    <citation type="journal article" date="2008" name="J. Mol. Biol.">
        <title>Structural insight into the specific interaction between murine SHPS-1/SIRP alpha and its ligand CD47.</title>
        <authorList>
            <person name="Nakaishi A."/>
            <person name="Hirose M."/>
            <person name="Yoshimura M."/>
            <person name="Oneyama C."/>
            <person name="Saito K."/>
            <person name="Kuki N."/>
            <person name="Matsuda M."/>
            <person name="Honma N."/>
            <person name="Ohnishi H."/>
            <person name="Matozaki T."/>
            <person name="Okada M."/>
            <person name="Nakagawa A."/>
        </authorList>
    </citation>
    <scope>X-RAY CRYSTALLOGRAPHY (1.40 ANGSTROMS) OF 32-146</scope>
    <scope>DISULFIDE BOND</scope>
    <scope>MUTAGENESIS OF ALA-441</scope>
    <scope>FUNCTION</scope>
</reference>
<sequence>MEPAGPAPGRLGPLLLCLLLSASCFCTGATGKELKVTQPEKSVSVAAGDSTVLNCTLTSLLPVGPIRWYRGVGPSRLLIYSFAGEYVPRIRNVSDTTKRNNMDFSIRISNVTPADAGIYYCVKFQKGSSEPDTEIQSGGGTEVYVLAKPSPPEVSGPADRGIPDQKVNFTCKSHGFSPRNITLKWFKDGQELHPLETTVNPSGKNVSYNISSTVRVVLNSMDVNSKVICEVAHITLDRSPLRGIANLSNFIRVSPTVKVTQQSPTSMNQVNLTCRAERFYPEDLQLIWLENGNVSRNDTPKNLTKNTDGTYNYTSLFLVNSSAHREDVVFTCQVKHDQQPAITRNHTVLGFAHSSDQGSMQTFPDNNATHNWNVFIGVGVACALLVVLLMAALYLLRIKQKKAKGSTSSTRLHEPEKNAREITQVQSLIQDTNDINDITYADLNLPKEKKPAPRAPEPNNHTEYASIETGKVPRPEDTLTYADLDMVHLSRAQPAPKPEPSFSEYASVQVQRK</sequence>
<name>SHPS1_MOUSE</name>
<keyword id="KW-0002">3D-structure</keyword>
<keyword id="KW-0025">Alternative splicing</keyword>
<keyword id="KW-0903">Direct protein sequencing</keyword>
<keyword id="KW-1015">Disulfide bond</keyword>
<keyword id="KW-0325">Glycoprotein</keyword>
<keyword id="KW-0393">Immunoglobulin domain</keyword>
<keyword id="KW-0472">Membrane</keyword>
<keyword id="KW-0597">Phosphoprotein</keyword>
<keyword id="KW-1185">Reference proteome</keyword>
<keyword id="KW-0677">Repeat</keyword>
<keyword id="KW-0729">SH3-binding</keyword>
<keyword id="KW-0732">Signal</keyword>
<keyword id="KW-0812">Transmembrane</keyword>
<keyword id="KW-1133">Transmembrane helix</keyword>
<proteinExistence type="evidence at protein level"/>
<accession>P97797</accession>
<accession>A0A0R4J1Z7</accession>
<accession>E0CYM8</accession>
<accession>E9QPT7</accession>
<accession>O08907</accession>
<accession>O35924</accession>
<accession>O88555</accession>
<accession>O88556</accession>
<accession>P97796</accession>
<accession>Q8R559</accession>
<accession>Q9QX57</accession>
<accession>Q9WTN4</accession>
<gene>
    <name type="primary">Sirpa</name>
    <name type="synonym">Bit</name>
    <name type="synonym">Myd1</name>
    <name type="synonym">Ptpns1</name>
    <name type="synonym">Shps1</name>
    <name type="synonym">Sirp</name>
</gene>
<evidence type="ECO:0000250" key="1">
    <source>
        <dbReference type="UniProtKB" id="P78324"/>
    </source>
</evidence>
<evidence type="ECO:0000250" key="2">
    <source>
        <dbReference type="UniProtKB" id="P97710"/>
    </source>
</evidence>
<evidence type="ECO:0000255" key="3"/>
<evidence type="ECO:0000255" key="4">
    <source>
        <dbReference type="PROSITE-ProRule" id="PRU00114"/>
    </source>
</evidence>
<evidence type="ECO:0000256" key="5">
    <source>
        <dbReference type="SAM" id="MobiDB-lite"/>
    </source>
</evidence>
<evidence type="ECO:0000269" key="6">
    <source>
    </source>
</evidence>
<evidence type="ECO:0000269" key="7">
    <source>
    </source>
</evidence>
<evidence type="ECO:0000269" key="8">
    <source>
    </source>
</evidence>
<evidence type="ECO:0000269" key="9">
    <source>
    </source>
</evidence>
<evidence type="ECO:0000269" key="10">
    <source>
    </source>
</evidence>
<evidence type="ECO:0000269" key="11">
    <source>
    </source>
</evidence>
<evidence type="ECO:0000269" key="12">
    <source>
    </source>
</evidence>
<evidence type="ECO:0000269" key="13">
    <source>
    </source>
</evidence>
<evidence type="ECO:0000269" key="14">
    <source>
    </source>
</evidence>
<evidence type="ECO:0000303" key="15">
    <source>
    </source>
</evidence>
<evidence type="ECO:0000303" key="16">
    <source>
    </source>
</evidence>
<evidence type="ECO:0000303" key="17">
    <source>
    </source>
</evidence>
<evidence type="ECO:0000303" key="18">
    <source>
    </source>
</evidence>
<evidence type="ECO:0000303" key="19">
    <source>
    </source>
</evidence>
<evidence type="ECO:0000305" key="20"/>
<evidence type="ECO:0007744" key="21">
    <source>
        <dbReference type="PDB" id="2YZ1"/>
    </source>
</evidence>
<evidence type="ECO:0007829" key="22">
    <source>
        <dbReference type="PDB" id="2YZ1"/>
    </source>
</evidence>
<protein>
    <recommendedName>
        <fullName>Tyrosine-protein phosphatase non-receptor type substrate 1</fullName>
        <shortName>SHP substrate 1</shortName>
        <shortName>SHPS-1</shortName>
    </recommendedName>
    <alternativeName>
        <fullName>Brain Ig-like molecule with tyrosine-based activation motifs</fullName>
        <shortName>Bit</shortName>
    </alternativeName>
    <alternativeName>
        <fullName>CD172 antigen-like family member A</fullName>
    </alternativeName>
    <alternativeName>
        <fullName>Inhibitory receptor SHPS-1</fullName>
    </alternativeName>
    <alternativeName>
        <fullName>MyD-1 antigen</fullName>
    </alternativeName>
    <alternativeName>
        <fullName>Signal-regulatory protein alpha-1</fullName>
        <shortName>Sirp-alpha-1</shortName>
        <shortName>mSIRP-alpha1</shortName>
    </alternativeName>
    <alternativeName>
        <fullName>p84</fullName>
    </alternativeName>
    <cdAntigenName>CD172a</cdAntigenName>
</protein>
<organism>
    <name type="scientific">Mus musculus</name>
    <name type="common">Mouse</name>
    <dbReference type="NCBI Taxonomy" id="10090"/>
    <lineage>
        <taxon>Eukaryota</taxon>
        <taxon>Metazoa</taxon>
        <taxon>Chordata</taxon>
        <taxon>Craniata</taxon>
        <taxon>Vertebrata</taxon>
        <taxon>Euteleostomi</taxon>
        <taxon>Mammalia</taxon>
        <taxon>Eutheria</taxon>
        <taxon>Euarchontoglires</taxon>
        <taxon>Glires</taxon>
        <taxon>Rodentia</taxon>
        <taxon>Myomorpha</taxon>
        <taxon>Muroidea</taxon>
        <taxon>Muridae</taxon>
        <taxon>Murinae</taxon>
        <taxon>Mus</taxon>
        <taxon>Mus</taxon>
    </lineage>
</organism>
<comment type="function">
    <text evidence="1 2 8 10">Immunoglobulin-like cell surface receptor for CD47 (PubMed:18045614). Acts as a docking protein and induces translocation of PTPN6, PTPN11 and other binding partners from the cytosol to the plasma membrane. Supports adhesion of cerebellar neurons, neurite outgrowth and glial cell attachment. May play a key role in intracellular signaling during synaptogenesis and in synaptic function. Involved in the negative regulation of receptor tyrosine kinase-coupled cellular responses induced by cell adhesion, growth factors or insulin. Mediates negative regulation of phagocytosis, mast cell activation and dendritic cell activation. CD47 binding prevents maturation of immature dendritic cells and inhibits cytokine production by mature dendritic cells (By similarity). Plays a role in antiviral immunity and limits new world arenavirus infection by decreasing virus internalization (PubMed:30726215). Receptor for THBS1 (By similarity). Interaction with THBS1 stimulates phosphorylation of SIRPA (By similarity). In response to THBS1, involved in ROS signaling in non-phagocytic cells, stimulating NADPH oxidase-derived ROS production (By similarity).</text>
</comment>
<comment type="subunit">
    <text evidence="1 10">Binds PTPN11 when tyrosine-phosphorylated, except in macrophages, where it primarily binds PTPN6. Binds GRB2 vitro. Binds FGR. Binds JAK2 irrespective of its phosphorylation status and forms a stable complex. Binds SCAP1 and/or SCAP2. The resulting complex recruits FYB1. Binds PTK2B (By similarity). Interacts with TRIM2 (PubMed:30726215).</text>
</comment>
<comment type="subcellular location">
    <subcellularLocation>
        <location>Membrane</location>
        <topology>Single-pass type I membrane protein</topology>
    </subcellularLocation>
</comment>
<comment type="alternative products">
    <event type="alternative splicing"/>
    <isoform>
        <id>P97797-1</id>
        <name>1</name>
        <name>a</name>
        <sequence type="displayed"/>
    </isoform>
    <isoform>
        <id>P97797-2</id>
        <name>2</name>
        <name>a'</name>
        <name>Large</name>
        <sequence type="described" ref="VSP_007032"/>
    </isoform>
    <isoform>
        <id>P97797-3</id>
        <name>3</name>
        <name>b</name>
        <name>Small</name>
        <sequence type="described" ref="VSP_007031"/>
    </isoform>
    <isoform>
        <id>P97797-4</id>
        <name>4</name>
        <sequence type="described" ref="VSP_007031 VSP_007032"/>
    </isoform>
    <text>Additional isoforms seem to exist.</text>
</comment>
<comment type="tissue specificity">
    <text evidence="9 11 13 14">Highly expressed in cerebral cortex, brain, spinal cord, cerebellum and spleen, and at much lower levels in kidney, thymus, heart, lung and liver. Within the cerebellum, highly expressed throughout the molecular layer, and in synaptic glomeruli in the granule cell layer. Detected in neurons of the hippocampus and dentate gyrus, and in olfactory bulb. Not detected in Purkinje cells. Highly expressed in the plexiform layers, optic fiber layer and the outer segments of the photoreceptor layer in the retina. Highly expressed in macrophages. Isoform 3 is detected at very low levels in all tissues tested.</text>
</comment>
<comment type="developmental stage">
    <text evidence="9">Highly expressed in the CNS of embryos from day 7 to 17.</text>
</comment>
<comment type="PTM">
    <text evidence="6 7 11 12 13">N-glycosylated.</text>
</comment>
<comment type="PTM">
    <text evidence="12 13">Phosphorylated on tyrosine residues.</text>
</comment>
<feature type="signal peptide">
    <location>
        <begin position="1"/>
        <end position="31"/>
    </location>
</feature>
<feature type="chain" id="PRO_0000014942" description="Tyrosine-protein phosphatase non-receptor type substrate 1">
    <location>
        <begin position="32"/>
        <end position="513"/>
    </location>
</feature>
<feature type="topological domain" description="Extracellular" evidence="3">
    <location>
        <begin position="32"/>
        <end position="373"/>
    </location>
</feature>
<feature type="transmembrane region" description="Helical" evidence="3">
    <location>
        <begin position="374"/>
        <end position="394"/>
    </location>
</feature>
<feature type="topological domain" description="Cytoplasmic" evidence="3">
    <location>
        <begin position="395"/>
        <end position="511"/>
    </location>
</feature>
<feature type="domain" description="Ig-like V-type">
    <location>
        <begin position="32"/>
        <end position="137"/>
    </location>
</feature>
<feature type="domain" description="Ig-like C1-type 1">
    <location>
        <begin position="149"/>
        <end position="248"/>
    </location>
</feature>
<feature type="domain" description="Ig-like C1-type 2">
    <location>
        <begin position="255"/>
        <end position="343"/>
    </location>
</feature>
<feature type="region of interest" description="Disordered" evidence="5">
    <location>
        <begin position="444"/>
        <end position="513"/>
    </location>
</feature>
<feature type="short sequence motif" description="SH2-binding" evidence="3">
    <location>
        <begin position="440"/>
        <end position="443"/>
    </location>
</feature>
<feature type="short sequence motif" description="SH3-binding" evidence="3">
    <location>
        <begin position="450"/>
        <end position="455"/>
    </location>
</feature>
<feature type="short sequence motif" description="SH2-binding" evidence="3">
    <location>
        <begin position="464"/>
        <end position="467"/>
    </location>
</feature>
<feature type="short sequence motif" description="SH2-binding" evidence="3">
    <location>
        <begin position="481"/>
        <end position="484"/>
    </location>
</feature>
<feature type="short sequence motif" description="SH2-binding" evidence="3">
    <location>
        <begin position="505"/>
        <end position="508"/>
    </location>
</feature>
<feature type="compositionally biased region" description="Polar residues" evidence="5">
    <location>
        <begin position="504"/>
        <end position="513"/>
    </location>
</feature>
<feature type="modified residue" description="Phosphotyrosine; by Tyr-kinases" evidence="3">
    <location>
        <position position="440"/>
    </location>
</feature>
<feature type="modified residue" description="Phosphotyrosine; by Tyr-kinases" evidence="3">
    <location>
        <position position="464"/>
    </location>
</feature>
<feature type="modified residue" description="Phosphotyrosine; by Tyr-kinases" evidence="2">
    <location>
        <position position="481"/>
    </location>
</feature>
<feature type="modified residue" description="Phosphotyrosine; by Tyr-kinases" evidence="2">
    <location>
        <position position="505"/>
    </location>
</feature>
<feature type="glycosylation site" description="N-linked (GlcNAc...) asparagine" evidence="3">
    <location>
        <position position="54"/>
    </location>
</feature>
<feature type="glycosylation site" description="N-linked (GlcNAc...) asparagine" evidence="3">
    <location>
        <position position="92"/>
    </location>
</feature>
<feature type="glycosylation site" description="N-linked (GlcNAc...) asparagine" evidence="3">
    <location>
        <position position="168"/>
    </location>
</feature>
<feature type="glycosylation site" description="N-linked (GlcNAc...) asparagine" evidence="3">
    <location>
        <position position="180"/>
    </location>
</feature>
<feature type="glycosylation site" description="N-linked (GlcNAc...) asparagine" evidence="3">
    <location>
        <position position="205"/>
    </location>
</feature>
<feature type="glycosylation site" description="N-linked (GlcNAc...) asparagine" evidence="3">
    <location>
        <position position="209"/>
    </location>
</feature>
<feature type="glycosylation site" description="N-linked (GlcNAc...) asparagine" evidence="7">
    <location>
        <position position="246"/>
    </location>
</feature>
<feature type="glycosylation site" description="N-linked (GlcNAc...) asparagine" evidence="3">
    <location>
        <position position="271"/>
    </location>
</feature>
<feature type="glycosylation site" description="N-linked (GlcNAc...) asparagine" evidence="3">
    <location>
        <position position="293"/>
    </location>
</feature>
<feature type="glycosylation site" description="N-linked (GlcNAc...) asparagine" evidence="3">
    <location>
        <position position="302"/>
    </location>
</feature>
<feature type="glycosylation site" description="N-linked (GlcNAc...) asparagine" evidence="3">
    <location>
        <position position="312"/>
    </location>
</feature>
<feature type="glycosylation site" description="N-linked (GlcNAc...) asparagine" evidence="3">
    <location>
        <position position="320"/>
    </location>
</feature>
<feature type="glycosylation site" description="N-linked (GlcNAc...) asparagine" evidence="3">
    <location>
        <position position="345"/>
    </location>
</feature>
<feature type="glycosylation site" description="N-linked (GlcNAc...) asparagine" evidence="3">
    <location>
        <position position="367"/>
    </location>
</feature>
<feature type="disulfide bond" evidence="4 8">
    <location>
        <begin position="55"/>
        <end position="121"/>
    </location>
</feature>
<feature type="disulfide bond" evidence="4">
    <location>
        <begin position="171"/>
        <end position="229"/>
    </location>
</feature>
<feature type="disulfide bond" evidence="4">
    <location>
        <begin position="274"/>
        <end position="332"/>
    </location>
</feature>
<feature type="splice variant" id="VSP_007031" description="In isoform 3 and isoform 4." evidence="15 18 19">
    <location>
        <begin position="147"/>
        <end position="364"/>
    </location>
</feature>
<feature type="splice variant" id="VSP_007032" description="In isoform 2 and isoform 4." evidence="15 16 17 18 19">
    <location>
        <begin position="425"/>
        <end position="428"/>
    </location>
</feature>
<feature type="mutagenesis site" description="Almost complete loss of CD47 binding." evidence="8">
    <original>A</original>
    <variation>V</variation>
    <location>
        <position position="441"/>
    </location>
</feature>
<feature type="sequence conflict" description="In Ref. 7; CAA71375." evidence="20" ref="7">
    <location>
        <position position="6"/>
    </location>
</feature>
<feature type="sequence conflict" description="In Ref. 3; AAB92591." evidence="20" ref="3">
    <original>R</original>
    <variation>L</variation>
    <location>
        <position position="10"/>
    </location>
</feature>
<feature type="sequence conflict" description="In Ref. 1; BAA13520/BAA13521, 5; BAA89289/BAA89290, 6; AAK56107 and 7; CAA71375." evidence="20" ref="1 5 6 7">
    <original>A</original>
    <variation>V</variation>
    <location>
        <position position="29"/>
    </location>
</feature>
<feature type="sequence conflict" description="In Ref. 2; BAA20376." evidence="20" ref="2">
    <original>K</original>
    <variation>T</variation>
    <location>
        <position position="32"/>
    </location>
</feature>
<feature type="sequence conflict" description="In Ref. 2; BAA20376." evidence="20" ref="2">
    <original>L</original>
    <variation>V</variation>
    <location>
        <position position="34"/>
    </location>
</feature>
<feature type="sequence conflict" description="In Ref. 2; BAA20376." evidence="20" ref="2">
    <original>V</original>
    <variation>I</variation>
    <location>
        <position position="52"/>
    </location>
</feature>
<feature type="sequence conflict" description="In Ref. 2; BAA20376." evidence="20" ref="2">
    <original>L</original>
    <variation>V</variation>
    <location>
        <position position="57"/>
    </location>
</feature>
<feature type="sequence conflict" description="In Ref. 1; BAA13520/BAA13521, 3; AAB92591, 5; BAA89289/BAA89290, 6; AAK56107 and 7; CAA71375." evidence="20" ref="1 3 5 6 7">
    <original>R</original>
    <variation>K</variation>
    <location>
        <position position="67"/>
    </location>
</feature>
<feature type="sequence conflict" description="In Ref. 7; CAA71375." evidence="20" ref="7">
    <original>PSRL</original>
    <variation>KAGC</variation>
    <location>
        <begin position="74"/>
        <end position="77"/>
    </location>
</feature>
<feature type="sequence conflict" description="In Ref. 1; BAA13520/BAA13521, 2; BAA20376, 3; AAB92591, 5; BAA89289/BAA89290 and 6; AAK56107." evidence="20" ref="1 2 3 5 6">
    <original>P</original>
    <variation>Q</variation>
    <location>
        <position position="74"/>
    </location>
</feature>
<feature type="sequence conflict" description="In Ref. 1; BAA13520/BAA13521, 2; BAA20376, 3; AAB92591, 5; BAA89289/BAA89290, 6; AAK56107 and 7; CAA71375." evidence="20" ref="1 2 3 5 6 7">
    <original>A</original>
    <variation>T</variation>
    <location>
        <position position="83"/>
    </location>
</feature>
<feature type="sequence conflict" description="In Ref. 1; BAA13520/BAA13521, 2; BAA20376, 3; AAB92591, 5; BAA89289/BAA89290, 6; AAK56107 and 7; CAA71375." evidence="20" ref="1 2 3 5 6 7">
    <original>Y</original>
    <variation>H</variation>
    <location>
        <position position="86"/>
    </location>
</feature>
<feature type="sequence conflict" description="In Ref. 1; BAA13520/BAA13521, 2; BAA20376, 3; AAB92591, 5; BAA89289/BAA89290, 6; AAK56107 and 7; CAA71375." evidence="20" ref="1 2 3 5 6 7">
    <original>V</original>
    <variation>F</variation>
    <location>
        <position position="87"/>
    </location>
</feature>
<feature type="sequence conflict" description="In Ref. 1; BAA13520/BAA13521, 2; BAA20376, 3; AAB92591, 5; BAA89289/BAA89290, 6; AAK56107 and 7; CAA71375." evidence="20" ref="1 2 3 5 6 7">
    <original>I</original>
    <variation>V</variation>
    <location>
        <position position="90"/>
    </location>
</feature>
<feature type="sequence conflict" description="In Ref. 1; BAA13520/BAA13521, 5; BAA89289/BAA89290, 6; AAK56107 and 7; CAA71375." evidence="20" ref="1 5 6 7">
    <original>R</original>
    <variation>T</variation>
    <location>
        <position position="91"/>
    </location>
</feature>
<feature type="sequence conflict" description="In Ref. 1; BAA13520/BAA13521, 5; BAA89289/BAA89290, 6; AAK56107 and 7; CAA71375." evidence="20" ref="1 5 6 7">
    <original>T</original>
    <variation>A</variation>
    <location>
        <position position="96"/>
    </location>
</feature>
<feature type="sequence conflict" description="In Ref. 1; BAA13520/BAA13521, 2; BAA20376, 3; AAB92591, 5; BAA89289/BAA89290, 6; AAK56107 and 7; CAA71375." evidence="20" ref="1 2 3 5 6 7">
    <original>A</original>
    <variation>E</variation>
    <location>
        <position position="114"/>
    </location>
</feature>
<feature type="sequence conflict" description="In Ref. 1; BAA13520/BAA13521, 2; BAA20376, 3; AAB92591, 5; BAA89289/BAA89290, 6; AAK56107 and 7; CAA71375." evidence="20" ref="1 2 3 5 6 7">
    <original>I</original>
    <variation>T</variation>
    <location>
        <position position="118"/>
    </location>
</feature>
<feature type="sequence conflict" description="In Ref. 2; BAA20376 and 3; AAB92591." evidence="20" ref="2 3">
    <original>K</original>
    <variation>R</variation>
    <location>
        <position position="126"/>
    </location>
</feature>
<feature type="sequence conflict" description="In Ref. 1; BAA13520/BAA13521, 5; BAA89289/BAA89290, 6; AAK56107 and 7; CAA71375." evidence="20" ref="1 5 6 7">
    <original>S</original>
    <variation>P</variation>
    <location>
        <position position="128"/>
    </location>
</feature>
<feature type="sequence conflict" description="In Ref. 7; CAA71375." evidence="20" ref="7">
    <original>VSG</original>
    <variation>YPV</variation>
    <location>
        <begin position="154"/>
        <end position="156"/>
    </location>
</feature>
<feature type="sequence conflict" description="In Ref. 7; CAA71375." evidence="20" ref="7">
    <original>D</original>
    <variation>Y</variation>
    <location>
        <position position="164"/>
    </location>
</feature>
<feature type="sequence conflict" description="In Ref. 1; BAA13520/BAA13521, 3; AAB92591, 5; BAA89289/BAA89290 and 6; AAK56107." evidence="20" ref="1 3 5 6">
    <original>P</original>
    <variation>H</variation>
    <location>
        <position position="194"/>
    </location>
</feature>
<feature type="sequence conflict" description="In Ref. 1; BAA13520/BAA13521, 3; AAB92591, 5; BAA89289/BAA89290, 6; AAK56107 and 7; CAA71375." evidence="20" ref="1 3 5 6 7">
    <original>N</original>
    <variation>H</variation>
    <location>
        <position position="224"/>
    </location>
</feature>
<feature type="sequence conflict" description="In Ref. 2; BAA20376." evidence="20" ref="2">
    <original>S</original>
    <variation>P</variation>
    <location>
        <position position="263"/>
    </location>
</feature>
<feature type="sequence conflict" description="In Ref. 7; CAA71375." evidence="20" ref="7">
    <original>A</original>
    <variation>D</variation>
    <location>
        <position position="276"/>
    </location>
</feature>
<feature type="sequence conflict" description="In Ref. 1; BAA13520/BAA13521, 2; BAA20376, 3; AAB92591, 5; BAA89289/BAA89290, 6; AAK56107 and 7; CAA71375." evidence="20" ref="1 2 3 5 6 7">
    <original>F</original>
    <variation>L</variation>
    <location>
        <position position="351"/>
    </location>
</feature>
<feature type="sequence conflict" description="In Ref. 1; BAA13520/BAA13521, 2; BAA20376, 3; AAB92591, 5; BAA89289/BAA89290, 6; AAK56107 and 7; CAA71375." evidence="20" ref="1 2 3 5 6 7">
    <original>D</original>
    <variation>G</variation>
    <location>
        <position position="365"/>
    </location>
</feature>
<feature type="sequence conflict" description="In Ref. 7; CAA71375." evidence="20" ref="7">
    <original>EKKPAPRAPEP</original>
    <variation>RRKPAPGSLEFL</variation>
    <location>
        <begin position="448"/>
        <end position="458"/>
    </location>
</feature>
<feature type="sequence conflict" description="In Ref. 2; BAA20376 and 3; AAB92591." evidence="20" ref="2 3">
    <original>S</original>
    <variation>N</variation>
    <location>
        <position position="490"/>
    </location>
</feature>
<feature type="strand" evidence="22">
    <location>
        <begin position="40"/>
        <end position="45"/>
    </location>
</feature>
<feature type="strand" evidence="22">
    <location>
        <begin position="51"/>
        <end position="53"/>
    </location>
</feature>
<feature type="strand" evidence="22">
    <location>
        <begin position="56"/>
        <end position="58"/>
    </location>
</feature>
<feature type="strand" evidence="22">
    <location>
        <begin position="66"/>
        <end position="73"/>
    </location>
</feature>
<feature type="strand" evidence="22">
    <location>
        <begin position="77"/>
        <end position="82"/>
    </location>
</feature>
<feature type="turn" evidence="22">
    <location>
        <begin position="87"/>
        <end position="89"/>
    </location>
</feature>
<feature type="strand" evidence="22">
    <location>
        <begin position="92"/>
        <end position="95"/>
    </location>
</feature>
<feature type="strand" evidence="22">
    <location>
        <begin position="98"/>
        <end position="100"/>
    </location>
</feature>
<feature type="strand" evidence="22">
    <location>
        <begin position="106"/>
        <end position="108"/>
    </location>
</feature>
<feature type="helix" evidence="22">
    <location>
        <begin position="113"/>
        <end position="115"/>
    </location>
</feature>
<feature type="strand" evidence="22">
    <location>
        <begin position="117"/>
        <end position="125"/>
    </location>
</feature>
<feature type="strand" evidence="22">
    <location>
        <begin position="128"/>
        <end position="131"/>
    </location>
</feature>
<feature type="strand" evidence="22">
    <location>
        <begin position="133"/>
        <end position="137"/>
    </location>
</feature>
<feature type="strand" evidence="22">
    <location>
        <begin position="141"/>
        <end position="145"/>
    </location>
</feature>